<keyword id="KW-0030">Aminoacyl-tRNA synthetase</keyword>
<keyword id="KW-0067">ATP-binding</keyword>
<keyword id="KW-0963">Cytoplasm</keyword>
<keyword id="KW-0436">Ligase</keyword>
<keyword id="KW-0547">Nucleotide-binding</keyword>
<keyword id="KW-0648">Protein biosynthesis</keyword>
<keyword id="KW-1185">Reference proteome</keyword>
<feature type="chain" id="PRO_0000122008" description="Serine--tRNA ligase">
    <location>
        <begin position="1"/>
        <end position="431"/>
    </location>
</feature>
<feature type="binding site" evidence="1">
    <location>
        <begin position="238"/>
        <end position="240"/>
    </location>
    <ligand>
        <name>L-serine</name>
        <dbReference type="ChEBI" id="CHEBI:33384"/>
    </ligand>
</feature>
<feature type="binding site" evidence="1">
    <location>
        <begin position="269"/>
        <end position="271"/>
    </location>
    <ligand>
        <name>ATP</name>
        <dbReference type="ChEBI" id="CHEBI:30616"/>
    </ligand>
</feature>
<feature type="binding site" evidence="1">
    <location>
        <position position="292"/>
    </location>
    <ligand>
        <name>L-serine</name>
        <dbReference type="ChEBI" id="CHEBI:33384"/>
    </ligand>
</feature>
<feature type="binding site" evidence="1">
    <location>
        <begin position="356"/>
        <end position="359"/>
    </location>
    <ligand>
        <name>ATP</name>
        <dbReference type="ChEBI" id="CHEBI:30616"/>
    </ligand>
</feature>
<feature type="binding site" evidence="1">
    <location>
        <position position="391"/>
    </location>
    <ligand>
        <name>L-serine</name>
        <dbReference type="ChEBI" id="CHEBI:33384"/>
    </ligand>
</feature>
<evidence type="ECO:0000255" key="1">
    <source>
        <dbReference type="HAMAP-Rule" id="MF_00176"/>
    </source>
</evidence>
<protein>
    <recommendedName>
        <fullName evidence="1">Serine--tRNA ligase</fullName>
        <ecNumber evidence="1">6.1.1.11</ecNumber>
    </recommendedName>
    <alternativeName>
        <fullName evidence="1">Seryl-tRNA synthetase</fullName>
        <shortName evidence="1">SerRS</shortName>
    </alternativeName>
    <alternativeName>
        <fullName evidence="1">Seryl-tRNA(Ser/Sec) synthetase</fullName>
    </alternativeName>
</protein>
<gene>
    <name evidence="1" type="primary">serS</name>
    <name type="ordered locus">Bd0077</name>
</gene>
<accession>Q6MRK1</accession>
<organism>
    <name type="scientific">Bdellovibrio bacteriovorus (strain ATCC 15356 / DSM 50701 / NCIMB 9529 / HD100)</name>
    <dbReference type="NCBI Taxonomy" id="264462"/>
    <lineage>
        <taxon>Bacteria</taxon>
        <taxon>Pseudomonadati</taxon>
        <taxon>Bdellovibrionota</taxon>
        <taxon>Bdellovibrionia</taxon>
        <taxon>Bdellovibrionales</taxon>
        <taxon>Pseudobdellovibrionaceae</taxon>
        <taxon>Bdellovibrio</taxon>
    </lineage>
</organism>
<name>SYS_BDEBA</name>
<sequence length="431" mass="48047">MIDIKLLEKKAETGTSYYDEYKQGLVNRGASTEVLEQIMELNKKRKELITQAETAKASQNKLSGEIGKIKREGGDASAILAEVDVLKTQVKELEAKAAEADQQVTNLALVIPNKPHSSVPVGSSEKDNKEIKVVGTPTQFSFKAKEHWELGEALNIIDFERAGKTTGTRFAFLKGAAAQMERALIQFMMDKHSMKHGYTEMIPPFMVNSNSLLGTGNFPKFKEDVFHLEGSDLYLIPTAEVPVTNYYNNEILDEKDLPQSFCAYSPCFRSEAGSAGRDTKGLIRQHQFDKVELMVFAHPDKSHEVHEALTSHAEQILMDLELPFRRVLLCTGDMGFGSAKTYDLEVWLPGQNAYREISSCSNFEDFQARRANIRFRSAGGKPQFVHTLNGSALAVGRTLVAILENYQREDGSVGIPKALQPYMGGRTEIRK</sequence>
<proteinExistence type="inferred from homology"/>
<reference key="1">
    <citation type="journal article" date="2004" name="Science">
        <title>A predator unmasked: life cycle of Bdellovibrio bacteriovorus from a genomic perspective.</title>
        <authorList>
            <person name="Rendulic S."/>
            <person name="Jagtap P."/>
            <person name="Rosinus A."/>
            <person name="Eppinger M."/>
            <person name="Baar C."/>
            <person name="Lanz C."/>
            <person name="Keller H."/>
            <person name="Lambert C."/>
            <person name="Evans K.J."/>
            <person name="Goesmann A."/>
            <person name="Meyer F."/>
            <person name="Sockett R.E."/>
            <person name="Schuster S.C."/>
        </authorList>
    </citation>
    <scope>NUCLEOTIDE SEQUENCE [LARGE SCALE GENOMIC DNA]</scope>
    <source>
        <strain>ATCC 15356 / DSM 50701 / NCIMB 9529 / HD100</strain>
    </source>
</reference>
<dbReference type="EC" id="6.1.1.11" evidence="1"/>
<dbReference type="EMBL" id="BX842646">
    <property type="protein sequence ID" value="CAE77757.1"/>
    <property type="molecule type" value="Genomic_DNA"/>
</dbReference>
<dbReference type="RefSeq" id="WP_011162698.1">
    <property type="nucleotide sequence ID" value="NC_005363.1"/>
</dbReference>
<dbReference type="SMR" id="Q6MRK1"/>
<dbReference type="STRING" id="264462.Bd0077"/>
<dbReference type="GeneID" id="93011228"/>
<dbReference type="KEGG" id="bba:Bd0077"/>
<dbReference type="eggNOG" id="COG0172">
    <property type="taxonomic scope" value="Bacteria"/>
</dbReference>
<dbReference type="HOGENOM" id="CLU_023797_1_1_7"/>
<dbReference type="UniPathway" id="UPA00906">
    <property type="reaction ID" value="UER00895"/>
</dbReference>
<dbReference type="Proteomes" id="UP000008080">
    <property type="component" value="Chromosome"/>
</dbReference>
<dbReference type="GO" id="GO:0005737">
    <property type="term" value="C:cytoplasm"/>
    <property type="evidence" value="ECO:0007669"/>
    <property type="project" value="UniProtKB-SubCell"/>
</dbReference>
<dbReference type="GO" id="GO:0005524">
    <property type="term" value="F:ATP binding"/>
    <property type="evidence" value="ECO:0007669"/>
    <property type="project" value="UniProtKB-UniRule"/>
</dbReference>
<dbReference type="GO" id="GO:0004828">
    <property type="term" value="F:serine-tRNA ligase activity"/>
    <property type="evidence" value="ECO:0007669"/>
    <property type="project" value="UniProtKB-UniRule"/>
</dbReference>
<dbReference type="GO" id="GO:0016260">
    <property type="term" value="P:selenocysteine biosynthetic process"/>
    <property type="evidence" value="ECO:0007669"/>
    <property type="project" value="UniProtKB-UniRule"/>
</dbReference>
<dbReference type="GO" id="GO:0006434">
    <property type="term" value="P:seryl-tRNA aminoacylation"/>
    <property type="evidence" value="ECO:0007669"/>
    <property type="project" value="UniProtKB-UniRule"/>
</dbReference>
<dbReference type="CDD" id="cd00770">
    <property type="entry name" value="SerRS_core"/>
    <property type="match status" value="1"/>
</dbReference>
<dbReference type="Gene3D" id="3.30.930.10">
    <property type="entry name" value="Bira Bifunctional Protein, Domain 2"/>
    <property type="match status" value="1"/>
</dbReference>
<dbReference type="Gene3D" id="1.10.287.40">
    <property type="entry name" value="Serine-tRNA synthetase, tRNA binding domain"/>
    <property type="match status" value="1"/>
</dbReference>
<dbReference type="HAMAP" id="MF_00176">
    <property type="entry name" value="Ser_tRNA_synth_type1"/>
    <property type="match status" value="1"/>
</dbReference>
<dbReference type="InterPro" id="IPR002314">
    <property type="entry name" value="aa-tRNA-synt_IIb"/>
</dbReference>
<dbReference type="InterPro" id="IPR006195">
    <property type="entry name" value="aa-tRNA-synth_II"/>
</dbReference>
<dbReference type="InterPro" id="IPR045864">
    <property type="entry name" value="aa-tRNA-synth_II/BPL/LPL"/>
</dbReference>
<dbReference type="InterPro" id="IPR002317">
    <property type="entry name" value="Ser-tRNA-ligase_type_1"/>
</dbReference>
<dbReference type="InterPro" id="IPR015866">
    <property type="entry name" value="Ser-tRNA-synth_1_N"/>
</dbReference>
<dbReference type="InterPro" id="IPR042103">
    <property type="entry name" value="SerRS_1_N_sf"/>
</dbReference>
<dbReference type="InterPro" id="IPR033729">
    <property type="entry name" value="SerRS_core"/>
</dbReference>
<dbReference type="InterPro" id="IPR010978">
    <property type="entry name" value="tRNA-bd_arm"/>
</dbReference>
<dbReference type="NCBIfam" id="TIGR00414">
    <property type="entry name" value="serS"/>
    <property type="match status" value="1"/>
</dbReference>
<dbReference type="PANTHER" id="PTHR43697:SF1">
    <property type="entry name" value="SERINE--TRNA LIGASE"/>
    <property type="match status" value="1"/>
</dbReference>
<dbReference type="PANTHER" id="PTHR43697">
    <property type="entry name" value="SERYL-TRNA SYNTHETASE"/>
    <property type="match status" value="1"/>
</dbReference>
<dbReference type="Pfam" id="PF02403">
    <property type="entry name" value="Seryl_tRNA_N"/>
    <property type="match status" value="1"/>
</dbReference>
<dbReference type="Pfam" id="PF00587">
    <property type="entry name" value="tRNA-synt_2b"/>
    <property type="match status" value="1"/>
</dbReference>
<dbReference type="PIRSF" id="PIRSF001529">
    <property type="entry name" value="Ser-tRNA-synth_IIa"/>
    <property type="match status" value="1"/>
</dbReference>
<dbReference type="PRINTS" id="PR00981">
    <property type="entry name" value="TRNASYNTHSER"/>
</dbReference>
<dbReference type="SUPFAM" id="SSF55681">
    <property type="entry name" value="Class II aaRS and biotin synthetases"/>
    <property type="match status" value="1"/>
</dbReference>
<dbReference type="SUPFAM" id="SSF46589">
    <property type="entry name" value="tRNA-binding arm"/>
    <property type="match status" value="1"/>
</dbReference>
<dbReference type="PROSITE" id="PS50862">
    <property type="entry name" value="AA_TRNA_LIGASE_II"/>
    <property type="match status" value="1"/>
</dbReference>
<comment type="function">
    <text evidence="1">Catalyzes the attachment of serine to tRNA(Ser). Is also able to aminoacylate tRNA(Sec) with serine, to form the misacylated tRNA L-seryl-tRNA(Sec), which will be further converted into selenocysteinyl-tRNA(Sec).</text>
</comment>
<comment type="catalytic activity">
    <reaction evidence="1">
        <text>tRNA(Ser) + L-serine + ATP = L-seryl-tRNA(Ser) + AMP + diphosphate + H(+)</text>
        <dbReference type="Rhea" id="RHEA:12292"/>
        <dbReference type="Rhea" id="RHEA-COMP:9669"/>
        <dbReference type="Rhea" id="RHEA-COMP:9703"/>
        <dbReference type="ChEBI" id="CHEBI:15378"/>
        <dbReference type="ChEBI" id="CHEBI:30616"/>
        <dbReference type="ChEBI" id="CHEBI:33019"/>
        <dbReference type="ChEBI" id="CHEBI:33384"/>
        <dbReference type="ChEBI" id="CHEBI:78442"/>
        <dbReference type="ChEBI" id="CHEBI:78533"/>
        <dbReference type="ChEBI" id="CHEBI:456215"/>
        <dbReference type="EC" id="6.1.1.11"/>
    </reaction>
</comment>
<comment type="catalytic activity">
    <reaction evidence="1">
        <text>tRNA(Sec) + L-serine + ATP = L-seryl-tRNA(Sec) + AMP + diphosphate + H(+)</text>
        <dbReference type="Rhea" id="RHEA:42580"/>
        <dbReference type="Rhea" id="RHEA-COMP:9742"/>
        <dbReference type="Rhea" id="RHEA-COMP:10128"/>
        <dbReference type="ChEBI" id="CHEBI:15378"/>
        <dbReference type="ChEBI" id="CHEBI:30616"/>
        <dbReference type="ChEBI" id="CHEBI:33019"/>
        <dbReference type="ChEBI" id="CHEBI:33384"/>
        <dbReference type="ChEBI" id="CHEBI:78442"/>
        <dbReference type="ChEBI" id="CHEBI:78533"/>
        <dbReference type="ChEBI" id="CHEBI:456215"/>
        <dbReference type="EC" id="6.1.1.11"/>
    </reaction>
</comment>
<comment type="pathway">
    <text evidence="1">Aminoacyl-tRNA biosynthesis; selenocysteinyl-tRNA(Sec) biosynthesis; L-seryl-tRNA(Sec) from L-serine and tRNA(Sec): step 1/1.</text>
</comment>
<comment type="subunit">
    <text evidence="1">Homodimer. The tRNA molecule binds across the dimer.</text>
</comment>
<comment type="subcellular location">
    <subcellularLocation>
        <location evidence="1">Cytoplasm</location>
    </subcellularLocation>
</comment>
<comment type="domain">
    <text evidence="1">Consists of two distinct domains, a catalytic core and a N-terminal extension that is involved in tRNA binding.</text>
</comment>
<comment type="similarity">
    <text evidence="1">Belongs to the class-II aminoacyl-tRNA synthetase family. Type-1 seryl-tRNA synthetase subfamily.</text>
</comment>